<organism>
    <name type="scientific">Magnetococcus marinus (strain ATCC BAA-1437 / JCM 17883 / MC-1)</name>
    <dbReference type="NCBI Taxonomy" id="156889"/>
    <lineage>
        <taxon>Bacteria</taxon>
        <taxon>Pseudomonadati</taxon>
        <taxon>Pseudomonadota</taxon>
        <taxon>Alphaproteobacteria</taxon>
        <taxon>Magnetococcales</taxon>
        <taxon>Magnetococcaceae</taxon>
        <taxon>Magnetococcus</taxon>
    </lineage>
</organism>
<gene>
    <name evidence="1" type="primary">rpmA</name>
    <name type="ordered locus">Mmc1_3351</name>
</gene>
<comment type="similarity">
    <text evidence="1">Belongs to the bacterial ribosomal protein bL27 family.</text>
</comment>
<proteinExistence type="inferred from homology"/>
<reference key="1">
    <citation type="journal article" date="2009" name="Appl. Environ. Microbiol.">
        <title>Complete genome sequence of the chemolithoautotrophic marine magnetotactic coccus strain MC-1.</title>
        <authorList>
            <person name="Schubbe S."/>
            <person name="Williams T.J."/>
            <person name="Xie G."/>
            <person name="Kiss H.E."/>
            <person name="Brettin T.S."/>
            <person name="Martinez D."/>
            <person name="Ross C.A."/>
            <person name="Schuler D."/>
            <person name="Cox B.L."/>
            <person name="Nealson K.H."/>
            <person name="Bazylinski D.A."/>
        </authorList>
    </citation>
    <scope>NUCLEOTIDE SEQUENCE [LARGE SCALE GENOMIC DNA]</scope>
    <source>
        <strain>ATCC BAA-1437 / JCM 17883 / MC-1</strain>
    </source>
</reference>
<evidence type="ECO:0000255" key="1">
    <source>
        <dbReference type="HAMAP-Rule" id="MF_00539"/>
    </source>
</evidence>
<evidence type="ECO:0000256" key="2">
    <source>
        <dbReference type="SAM" id="MobiDB-lite"/>
    </source>
</evidence>
<evidence type="ECO:0000305" key="3"/>
<name>RL27_MAGMM</name>
<sequence>MAHKKAGGSSRNGRDSEGRRLGVKKYGGENVIPGNILVRQRGTKMWPGVGVGMGKDHTLFALEEGRVAFTMRRNRQYVNVEVAAAQ</sequence>
<feature type="chain" id="PRO_1000017510" description="Large ribosomal subunit protein bL27">
    <location>
        <begin position="1"/>
        <end position="86"/>
    </location>
</feature>
<feature type="region of interest" description="Disordered" evidence="2">
    <location>
        <begin position="1"/>
        <end position="24"/>
    </location>
</feature>
<protein>
    <recommendedName>
        <fullName evidence="1">Large ribosomal subunit protein bL27</fullName>
    </recommendedName>
    <alternativeName>
        <fullName evidence="3">50S ribosomal protein L27</fullName>
    </alternativeName>
</protein>
<dbReference type="EMBL" id="CP000471">
    <property type="protein sequence ID" value="ABK45837.1"/>
    <property type="molecule type" value="Genomic_DNA"/>
</dbReference>
<dbReference type="RefSeq" id="WP_011714896.1">
    <property type="nucleotide sequence ID" value="NC_008576.1"/>
</dbReference>
<dbReference type="SMR" id="A0LCZ4"/>
<dbReference type="STRING" id="156889.Mmc1_3351"/>
<dbReference type="KEGG" id="mgm:Mmc1_3351"/>
<dbReference type="eggNOG" id="COG0211">
    <property type="taxonomic scope" value="Bacteria"/>
</dbReference>
<dbReference type="HOGENOM" id="CLU_095424_4_1_5"/>
<dbReference type="OrthoDB" id="9803474at2"/>
<dbReference type="Proteomes" id="UP000002586">
    <property type="component" value="Chromosome"/>
</dbReference>
<dbReference type="GO" id="GO:0022625">
    <property type="term" value="C:cytosolic large ribosomal subunit"/>
    <property type="evidence" value="ECO:0007669"/>
    <property type="project" value="TreeGrafter"/>
</dbReference>
<dbReference type="GO" id="GO:0003735">
    <property type="term" value="F:structural constituent of ribosome"/>
    <property type="evidence" value="ECO:0007669"/>
    <property type="project" value="InterPro"/>
</dbReference>
<dbReference type="GO" id="GO:0006412">
    <property type="term" value="P:translation"/>
    <property type="evidence" value="ECO:0007669"/>
    <property type="project" value="UniProtKB-UniRule"/>
</dbReference>
<dbReference type="FunFam" id="2.40.50.100:FF:000020">
    <property type="entry name" value="50S ribosomal protein L27"/>
    <property type="match status" value="1"/>
</dbReference>
<dbReference type="Gene3D" id="2.40.50.100">
    <property type="match status" value="1"/>
</dbReference>
<dbReference type="HAMAP" id="MF_00539">
    <property type="entry name" value="Ribosomal_bL27"/>
    <property type="match status" value="1"/>
</dbReference>
<dbReference type="InterPro" id="IPR001684">
    <property type="entry name" value="Ribosomal_bL27"/>
</dbReference>
<dbReference type="InterPro" id="IPR018261">
    <property type="entry name" value="Ribosomal_bL27_CS"/>
</dbReference>
<dbReference type="NCBIfam" id="TIGR00062">
    <property type="entry name" value="L27"/>
    <property type="match status" value="1"/>
</dbReference>
<dbReference type="PANTHER" id="PTHR15893:SF0">
    <property type="entry name" value="LARGE RIBOSOMAL SUBUNIT PROTEIN BL27M"/>
    <property type="match status" value="1"/>
</dbReference>
<dbReference type="PANTHER" id="PTHR15893">
    <property type="entry name" value="RIBOSOMAL PROTEIN L27"/>
    <property type="match status" value="1"/>
</dbReference>
<dbReference type="Pfam" id="PF01016">
    <property type="entry name" value="Ribosomal_L27"/>
    <property type="match status" value="1"/>
</dbReference>
<dbReference type="PRINTS" id="PR00063">
    <property type="entry name" value="RIBOSOMALL27"/>
</dbReference>
<dbReference type="SUPFAM" id="SSF110324">
    <property type="entry name" value="Ribosomal L27 protein-like"/>
    <property type="match status" value="1"/>
</dbReference>
<dbReference type="PROSITE" id="PS00831">
    <property type="entry name" value="RIBOSOMAL_L27"/>
    <property type="match status" value="1"/>
</dbReference>
<accession>A0LCZ4</accession>
<keyword id="KW-1185">Reference proteome</keyword>
<keyword id="KW-0687">Ribonucleoprotein</keyword>
<keyword id="KW-0689">Ribosomal protein</keyword>